<dbReference type="EC" id="2.7.2.3" evidence="1"/>
<dbReference type="EMBL" id="CP000031">
    <property type="protein sequence ID" value="AAV95501.1"/>
    <property type="molecule type" value="Genomic_DNA"/>
</dbReference>
<dbReference type="RefSeq" id="WP_011047957.1">
    <property type="nucleotide sequence ID" value="NC_003911.12"/>
</dbReference>
<dbReference type="SMR" id="Q5LR94"/>
<dbReference type="STRING" id="246200.SPO2235"/>
<dbReference type="PaxDb" id="246200-SPO2235"/>
<dbReference type="KEGG" id="sil:SPO2235"/>
<dbReference type="eggNOG" id="COG0126">
    <property type="taxonomic scope" value="Bacteria"/>
</dbReference>
<dbReference type="HOGENOM" id="CLU_025427_0_2_5"/>
<dbReference type="OrthoDB" id="9808460at2"/>
<dbReference type="UniPathway" id="UPA00109">
    <property type="reaction ID" value="UER00185"/>
</dbReference>
<dbReference type="Proteomes" id="UP000001023">
    <property type="component" value="Chromosome"/>
</dbReference>
<dbReference type="GO" id="GO:0005829">
    <property type="term" value="C:cytosol"/>
    <property type="evidence" value="ECO:0007669"/>
    <property type="project" value="TreeGrafter"/>
</dbReference>
<dbReference type="GO" id="GO:0043531">
    <property type="term" value="F:ADP binding"/>
    <property type="evidence" value="ECO:0007669"/>
    <property type="project" value="TreeGrafter"/>
</dbReference>
<dbReference type="GO" id="GO:0005524">
    <property type="term" value="F:ATP binding"/>
    <property type="evidence" value="ECO:0007669"/>
    <property type="project" value="UniProtKB-KW"/>
</dbReference>
<dbReference type="GO" id="GO:0004618">
    <property type="term" value="F:phosphoglycerate kinase activity"/>
    <property type="evidence" value="ECO:0007669"/>
    <property type="project" value="UniProtKB-UniRule"/>
</dbReference>
<dbReference type="GO" id="GO:0006094">
    <property type="term" value="P:gluconeogenesis"/>
    <property type="evidence" value="ECO:0007669"/>
    <property type="project" value="TreeGrafter"/>
</dbReference>
<dbReference type="GO" id="GO:0006096">
    <property type="term" value="P:glycolytic process"/>
    <property type="evidence" value="ECO:0007669"/>
    <property type="project" value="UniProtKB-UniRule"/>
</dbReference>
<dbReference type="FunFam" id="3.40.50.1260:FF:000006">
    <property type="entry name" value="Phosphoglycerate kinase"/>
    <property type="match status" value="1"/>
</dbReference>
<dbReference type="FunFam" id="3.40.50.1260:FF:000031">
    <property type="entry name" value="Phosphoglycerate kinase 1"/>
    <property type="match status" value="1"/>
</dbReference>
<dbReference type="Gene3D" id="3.40.50.1260">
    <property type="entry name" value="Phosphoglycerate kinase, N-terminal domain"/>
    <property type="match status" value="2"/>
</dbReference>
<dbReference type="HAMAP" id="MF_00145">
    <property type="entry name" value="Phosphoglyc_kinase"/>
    <property type="match status" value="1"/>
</dbReference>
<dbReference type="InterPro" id="IPR001576">
    <property type="entry name" value="Phosphoglycerate_kinase"/>
</dbReference>
<dbReference type="InterPro" id="IPR015911">
    <property type="entry name" value="Phosphoglycerate_kinase_CS"/>
</dbReference>
<dbReference type="InterPro" id="IPR015824">
    <property type="entry name" value="Phosphoglycerate_kinase_N"/>
</dbReference>
<dbReference type="InterPro" id="IPR036043">
    <property type="entry name" value="Phosphoglycerate_kinase_sf"/>
</dbReference>
<dbReference type="PANTHER" id="PTHR11406">
    <property type="entry name" value="PHOSPHOGLYCERATE KINASE"/>
    <property type="match status" value="1"/>
</dbReference>
<dbReference type="PANTHER" id="PTHR11406:SF23">
    <property type="entry name" value="PHOSPHOGLYCERATE KINASE 1, CHLOROPLASTIC-RELATED"/>
    <property type="match status" value="1"/>
</dbReference>
<dbReference type="Pfam" id="PF00162">
    <property type="entry name" value="PGK"/>
    <property type="match status" value="1"/>
</dbReference>
<dbReference type="PIRSF" id="PIRSF000724">
    <property type="entry name" value="Pgk"/>
    <property type="match status" value="1"/>
</dbReference>
<dbReference type="PRINTS" id="PR00477">
    <property type="entry name" value="PHGLYCKINASE"/>
</dbReference>
<dbReference type="SUPFAM" id="SSF53748">
    <property type="entry name" value="Phosphoglycerate kinase"/>
    <property type="match status" value="1"/>
</dbReference>
<dbReference type="PROSITE" id="PS00111">
    <property type="entry name" value="PGLYCERATE_KINASE"/>
    <property type="match status" value="1"/>
</dbReference>
<comment type="catalytic activity">
    <reaction evidence="1">
        <text>(2R)-3-phosphoglycerate + ATP = (2R)-3-phospho-glyceroyl phosphate + ADP</text>
        <dbReference type="Rhea" id="RHEA:14801"/>
        <dbReference type="ChEBI" id="CHEBI:30616"/>
        <dbReference type="ChEBI" id="CHEBI:57604"/>
        <dbReference type="ChEBI" id="CHEBI:58272"/>
        <dbReference type="ChEBI" id="CHEBI:456216"/>
        <dbReference type="EC" id="2.7.2.3"/>
    </reaction>
</comment>
<comment type="pathway">
    <text evidence="1">Carbohydrate degradation; glycolysis; pyruvate from D-glyceraldehyde 3-phosphate: step 2/5.</text>
</comment>
<comment type="subunit">
    <text evidence="1">Monomer.</text>
</comment>
<comment type="subcellular location">
    <subcellularLocation>
        <location evidence="1">Cytoplasm</location>
    </subcellularLocation>
</comment>
<comment type="similarity">
    <text evidence="1">Belongs to the phosphoglycerate kinase family.</text>
</comment>
<protein>
    <recommendedName>
        <fullName evidence="1">Phosphoglycerate kinase</fullName>
        <ecNumber evidence="1">2.7.2.3</ecNumber>
    </recommendedName>
</protein>
<proteinExistence type="inferred from homology"/>
<sequence>MGWKTLDDMDLTGKRVLVRVDINVPIVDGVVTDSTRIRRLMPTIRDILAAGGRPILLAHFGRPGGERRKNLSLGQLVPTLERAFETKVLFADDCVGPAAEEAAEALQPGQVLLLENTRFHASETKNDPDLAAGMARLGDIYCNDAFSAAHRAHSSTEAIARLLPSCAGRLMQAELEALEKALGKPERPVTAVVGGAKVSTKLELLGNLIEKVDYLVIGGGMANTFLVAKGLPVGKSLAERIMKDTAAEILAKAEAAGCTIVLPSDVVVAEKFESHAPHQILPNDRCPDEGMILDAGPDSLAAIKAIFEKSRTLIWNGPLGAFELEPFDAATNAAALKAAALTRAGKLISVAGGGDTVAALNASGAAGDFTYISTAGGAFLEWMEGKTLPGVAALIQAG</sequence>
<reference key="1">
    <citation type="journal article" date="2004" name="Nature">
        <title>Genome sequence of Silicibacter pomeroyi reveals adaptations to the marine environment.</title>
        <authorList>
            <person name="Moran M.A."/>
            <person name="Buchan A."/>
            <person name="Gonzalez J.M."/>
            <person name="Heidelberg J.F."/>
            <person name="Whitman W.B."/>
            <person name="Kiene R.P."/>
            <person name="Henriksen J.R."/>
            <person name="King G.M."/>
            <person name="Belas R."/>
            <person name="Fuqua C."/>
            <person name="Brinkac L.M."/>
            <person name="Lewis M."/>
            <person name="Johri S."/>
            <person name="Weaver B."/>
            <person name="Pai G."/>
            <person name="Eisen J.A."/>
            <person name="Rahe E."/>
            <person name="Sheldon W.M."/>
            <person name="Ye W."/>
            <person name="Miller T.R."/>
            <person name="Carlton J."/>
            <person name="Rasko D.A."/>
            <person name="Paulsen I.T."/>
            <person name="Ren Q."/>
            <person name="Daugherty S.C."/>
            <person name="DeBoy R.T."/>
            <person name="Dodson R.J."/>
            <person name="Durkin A.S."/>
            <person name="Madupu R."/>
            <person name="Nelson W.C."/>
            <person name="Sullivan S.A."/>
            <person name="Rosovitz M.J."/>
            <person name="Haft D.H."/>
            <person name="Selengut J."/>
            <person name="Ward N."/>
        </authorList>
    </citation>
    <scope>NUCLEOTIDE SEQUENCE [LARGE SCALE GENOMIC DNA]</scope>
    <source>
        <strain>ATCC 700808 / DSM 15171 / DSS-3</strain>
    </source>
</reference>
<reference key="2">
    <citation type="journal article" date="2014" name="Stand. Genomic Sci.">
        <title>An updated genome annotation for the model marine bacterium Ruegeria pomeroyi DSS-3.</title>
        <authorList>
            <person name="Rivers A.R."/>
            <person name="Smith C.B."/>
            <person name="Moran M.A."/>
        </authorList>
    </citation>
    <scope>GENOME REANNOTATION</scope>
    <source>
        <strain>ATCC 700808 / DSM 15171 / DSS-3</strain>
    </source>
</reference>
<keyword id="KW-0067">ATP-binding</keyword>
<keyword id="KW-0963">Cytoplasm</keyword>
<keyword id="KW-0324">Glycolysis</keyword>
<keyword id="KW-0418">Kinase</keyword>
<keyword id="KW-0547">Nucleotide-binding</keyword>
<keyword id="KW-1185">Reference proteome</keyword>
<keyword id="KW-0808">Transferase</keyword>
<feature type="chain" id="PRO_1000058068" description="Phosphoglycerate kinase">
    <location>
        <begin position="1"/>
        <end position="398"/>
    </location>
</feature>
<feature type="binding site" evidence="1">
    <location>
        <begin position="21"/>
        <end position="23"/>
    </location>
    <ligand>
        <name>substrate</name>
    </ligand>
</feature>
<feature type="binding site" evidence="1">
    <location>
        <position position="36"/>
    </location>
    <ligand>
        <name>substrate</name>
    </ligand>
</feature>
<feature type="binding site" evidence="1">
    <location>
        <begin position="59"/>
        <end position="62"/>
    </location>
    <ligand>
        <name>substrate</name>
    </ligand>
</feature>
<feature type="binding site" evidence="1">
    <location>
        <position position="118"/>
    </location>
    <ligand>
        <name>substrate</name>
    </ligand>
</feature>
<feature type="binding site" evidence="1">
    <location>
        <position position="151"/>
    </location>
    <ligand>
        <name>substrate</name>
    </ligand>
</feature>
<feature type="binding site" evidence="1">
    <location>
        <position position="201"/>
    </location>
    <ligand>
        <name>ATP</name>
        <dbReference type="ChEBI" id="CHEBI:30616"/>
    </ligand>
</feature>
<feature type="binding site" evidence="1">
    <location>
        <position position="323"/>
    </location>
    <ligand>
        <name>ATP</name>
        <dbReference type="ChEBI" id="CHEBI:30616"/>
    </ligand>
</feature>
<feature type="binding site" evidence="1">
    <location>
        <begin position="353"/>
        <end position="356"/>
    </location>
    <ligand>
        <name>ATP</name>
        <dbReference type="ChEBI" id="CHEBI:30616"/>
    </ligand>
</feature>
<accession>Q5LR94</accession>
<gene>
    <name evidence="1" type="primary">pgk</name>
    <name type="ordered locus">SPO2235</name>
</gene>
<evidence type="ECO:0000255" key="1">
    <source>
        <dbReference type="HAMAP-Rule" id="MF_00145"/>
    </source>
</evidence>
<name>PGK_RUEPO</name>
<organism>
    <name type="scientific">Ruegeria pomeroyi (strain ATCC 700808 / DSM 15171 / DSS-3)</name>
    <name type="common">Silicibacter pomeroyi</name>
    <dbReference type="NCBI Taxonomy" id="246200"/>
    <lineage>
        <taxon>Bacteria</taxon>
        <taxon>Pseudomonadati</taxon>
        <taxon>Pseudomonadota</taxon>
        <taxon>Alphaproteobacteria</taxon>
        <taxon>Rhodobacterales</taxon>
        <taxon>Roseobacteraceae</taxon>
        <taxon>Ruegeria</taxon>
    </lineage>
</organism>